<feature type="initiator methionine" description="Removed" evidence="1">
    <location>
        <position position="1"/>
    </location>
</feature>
<feature type="chain" id="PRO_0000228677" description="Keratin, type II cytoskeletal 8">
    <location>
        <begin position="2"/>
        <end position="497"/>
    </location>
</feature>
<feature type="domain" description="IF rod" evidence="3">
    <location>
        <begin position="109"/>
        <end position="421"/>
    </location>
</feature>
<feature type="region of interest" description="Head">
    <location>
        <begin position="2"/>
        <end position="108"/>
    </location>
</feature>
<feature type="region of interest" description="Coil 1A">
    <location>
        <begin position="109"/>
        <end position="149"/>
    </location>
</feature>
<feature type="region of interest" description="Linker 1">
    <location>
        <begin position="145"/>
        <end position="162"/>
    </location>
</feature>
<feature type="region of interest" description="Coil 1B">
    <location>
        <begin position="163"/>
        <end position="254"/>
    </location>
</feature>
<feature type="region of interest" description="Linker 12">
    <location>
        <begin position="255"/>
        <end position="278"/>
    </location>
</feature>
<feature type="region of interest" description="Coil 2">
    <location>
        <begin position="279"/>
        <end position="417"/>
    </location>
</feature>
<feature type="region of interest" description="Tail">
    <location>
        <begin position="418"/>
        <end position="497"/>
    </location>
</feature>
<feature type="site" description="Stutter">
    <location>
        <position position="361"/>
    </location>
</feature>
<name>K2C8_PROAT</name>
<proteinExistence type="evidence at protein level"/>
<dbReference type="EMBL" id="AJ785798">
    <property type="protein sequence ID" value="CAH05054.1"/>
    <property type="molecule type" value="mRNA"/>
</dbReference>
<dbReference type="SMR" id="Q5K2N3"/>
<dbReference type="GO" id="GO:0005737">
    <property type="term" value="C:cytoplasm"/>
    <property type="evidence" value="ECO:0000250"/>
    <property type="project" value="UniProtKB"/>
</dbReference>
<dbReference type="GO" id="GO:0045095">
    <property type="term" value="C:keratin filament"/>
    <property type="evidence" value="ECO:0007669"/>
    <property type="project" value="InterPro"/>
</dbReference>
<dbReference type="GO" id="GO:0016363">
    <property type="term" value="C:nuclear matrix"/>
    <property type="evidence" value="ECO:0007669"/>
    <property type="project" value="UniProtKB-SubCell"/>
</dbReference>
<dbReference type="GO" id="GO:0005654">
    <property type="term" value="C:nucleoplasm"/>
    <property type="evidence" value="ECO:0007669"/>
    <property type="project" value="UniProtKB-SubCell"/>
</dbReference>
<dbReference type="FunFam" id="1.20.5.1160:FF:000001">
    <property type="entry name" value="Keratin type II"/>
    <property type="match status" value="1"/>
</dbReference>
<dbReference type="FunFam" id="1.20.5.170:FF:000004">
    <property type="entry name" value="Keratin, type II cytoskeletal 5"/>
    <property type="match status" value="1"/>
</dbReference>
<dbReference type="FunFam" id="1.20.5.500:FF:000001">
    <property type="entry name" value="Type II keratin 23"/>
    <property type="match status" value="1"/>
</dbReference>
<dbReference type="Gene3D" id="1.20.5.170">
    <property type="match status" value="1"/>
</dbReference>
<dbReference type="Gene3D" id="1.20.5.500">
    <property type="entry name" value="Single helix bin"/>
    <property type="match status" value="1"/>
</dbReference>
<dbReference type="Gene3D" id="1.20.5.1160">
    <property type="entry name" value="Vasodilator-stimulated phosphoprotein"/>
    <property type="match status" value="1"/>
</dbReference>
<dbReference type="InterPro" id="IPR018039">
    <property type="entry name" value="IF_conserved"/>
</dbReference>
<dbReference type="InterPro" id="IPR039008">
    <property type="entry name" value="IF_rod_dom"/>
</dbReference>
<dbReference type="InterPro" id="IPR032444">
    <property type="entry name" value="Keratin_2_head"/>
</dbReference>
<dbReference type="InterPro" id="IPR003054">
    <property type="entry name" value="Keratin_II"/>
</dbReference>
<dbReference type="PANTHER" id="PTHR45616">
    <property type="entry name" value="GATA-TYPE DOMAIN-CONTAINING PROTEIN"/>
    <property type="match status" value="1"/>
</dbReference>
<dbReference type="PANTHER" id="PTHR45616:SF26">
    <property type="entry name" value="KERATIN, TYPE II CYTOSKELETAL 8"/>
    <property type="match status" value="1"/>
</dbReference>
<dbReference type="Pfam" id="PF00038">
    <property type="entry name" value="Filament"/>
    <property type="match status" value="1"/>
</dbReference>
<dbReference type="Pfam" id="PF16208">
    <property type="entry name" value="Keratin_2_head"/>
    <property type="match status" value="1"/>
</dbReference>
<dbReference type="PRINTS" id="PR01276">
    <property type="entry name" value="TYPE2KERATIN"/>
</dbReference>
<dbReference type="SMART" id="SM01391">
    <property type="entry name" value="Filament"/>
    <property type="match status" value="1"/>
</dbReference>
<dbReference type="SUPFAM" id="SSF64593">
    <property type="entry name" value="Intermediate filament protein, coiled coil region"/>
    <property type="match status" value="3"/>
</dbReference>
<dbReference type="PROSITE" id="PS00226">
    <property type="entry name" value="IF_ROD_1"/>
    <property type="match status" value="1"/>
</dbReference>
<dbReference type="PROSITE" id="PS51842">
    <property type="entry name" value="IF_ROD_2"/>
    <property type="match status" value="1"/>
</dbReference>
<organism>
    <name type="scientific">Protopterus aethiopicus</name>
    <name type="common">Marbled lungfish</name>
    <dbReference type="NCBI Taxonomy" id="7886"/>
    <lineage>
        <taxon>Eukaryota</taxon>
        <taxon>Metazoa</taxon>
        <taxon>Chordata</taxon>
        <taxon>Craniata</taxon>
        <taxon>Vertebrata</taxon>
        <taxon>Euteleostomi</taxon>
        <taxon>Dipnomorpha</taxon>
        <taxon>Ceratodontiformes</taxon>
        <taxon>Lepidosirenoidei</taxon>
        <taxon>Protopteridae</taxon>
        <taxon>Protopterus</taxon>
    </lineage>
</organism>
<keyword id="KW-0175">Coiled coil</keyword>
<keyword id="KW-0963">Cytoplasm</keyword>
<keyword id="KW-0403">Intermediate filament</keyword>
<keyword id="KW-0416">Keratin</keyword>
<keyword id="KW-0539">Nucleus</keyword>
<sequence length="497" mass="55580">MTSYQRTVTVRSSTAPKSFTSRSYTGGRFATKASTGPLSLGSVYGGGSGRIGATTAFSTSTSYGGGSSFSGISAGTGFPPITNVTVNKSLLAPLNLEIDPRIGQVRLEEKEQIKTLNNQFAGFIDKVRYLEQQNKLLETKWQLLQNQTTPSRSNLDSMFEAYISNLRRQLDTLGQEKGKLEAELHNMQGLVEDFKNKYEDEINKRTDTENEFVLIKKDVDEAYMNKVELEAKLEALTDEINFLRQIYDEEIRELQTQIQDTSVIVQMDNNRQLDLDNIIAEVRAQYEDMAKKSRAEAETYYQQKYEELSSSAGKYGDDLRNTKNEIAELTRYINRLNSDIDALKGQRANLEAAIAEAEERGEQAVKNAQAQLQELQNALTQAKQDMARQLREYQELMNVKLALDIEIATYRKLLEGEESRLASGIQAATVQVNQSSYSGVRAPILSSGFGSGSFQTSSYSSFPLETSYSSPKKSIIVKTIESRDGKIVSERSNIVKE</sequence>
<comment type="function">
    <text evidence="2">Together with KRT19, helps to link the contractile apparatus to dystrophin at the costameres of striated muscle.</text>
</comment>
<comment type="subunit">
    <text evidence="1">Heterotetramer of two type I and two type II keratins. Keratin-8 associates with keratin-18 (By similarity).</text>
</comment>
<comment type="subcellular location">
    <subcellularLocation>
        <location evidence="1">Cytoplasm</location>
    </subcellularLocation>
    <subcellularLocation>
        <location evidence="1">Nucleus</location>
        <location evidence="1">Nucleoplasm</location>
    </subcellularLocation>
    <subcellularLocation>
        <location evidence="1">Nucleus matrix</location>
    </subcellularLocation>
</comment>
<comment type="tissue specificity">
    <text evidence="4">Expressed in skin.</text>
</comment>
<comment type="miscellaneous">
    <text>There are two types of cytoskeletal and microfibrillar keratin: I (acidic; 40-55 kDa) and II (neutral to basic; 56-70 kDa).</text>
</comment>
<comment type="similarity">
    <text evidence="3">Belongs to the intermediate filament family.</text>
</comment>
<gene>
    <name evidence="6" type="primary">KRT8</name>
</gene>
<reference evidence="5 6" key="1">
    <citation type="journal article" date="2005" name="Eur. J. Cell Biol.">
        <title>Evolution of tissue-specific keratins as deduced from novel cDNA sequences of the lungfish Protopterus aethiopicus.</title>
        <authorList>
            <person name="Schaffeld M."/>
            <person name="Bremer M."/>
            <person name="Hunzinger C."/>
            <person name="Markl J."/>
        </authorList>
    </citation>
    <scope>NUCLEOTIDE SEQUENCE [MRNA]</scope>
    <scope>TISSUE SPECIFICITY</scope>
    <scope>IDENTIFICATION BY MASS SPECTROMETRY</scope>
    <source>
        <tissue evidence="4">Skin</tissue>
    </source>
</reference>
<accession>Q5K2N3</accession>
<protein>
    <recommendedName>
        <fullName>Keratin, type II cytoskeletal 8</fullName>
    </recommendedName>
    <alternativeName>
        <fullName>Cytokeratin-8</fullName>
        <shortName>CK-8</shortName>
    </alternativeName>
    <alternativeName>
        <fullName>Keratin-8</fullName>
        <shortName>K8</shortName>
    </alternativeName>
</protein>
<evidence type="ECO:0000250" key="1"/>
<evidence type="ECO:0000250" key="2">
    <source>
        <dbReference type="UniProtKB" id="P05787"/>
    </source>
</evidence>
<evidence type="ECO:0000255" key="3">
    <source>
        <dbReference type="PROSITE-ProRule" id="PRU01188"/>
    </source>
</evidence>
<evidence type="ECO:0000269" key="4">
    <source>
    </source>
</evidence>
<evidence type="ECO:0000305" key="5"/>
<evidence type="ECO:0000312" key="6">
    <source>
        <dbReference type="EMBL" id="CAH05054.1"/>
    </source>
</evidence>